<evidence type="ECO:0000250" key="1"/>
<evidence type="ECO:0000255" key="2"/>
<evidence type="ECO:0000255" key="3">
    <source>
        <dbReference type="PROSITE-ProRule" id="PRU00062"/>
    </source>
</evidence>
<evidence type="ECO:0000255" key="4">
    <source>
        <dbReference type="PROSITE-ProRule" id="PRU00116"/>
    </source>
</evidence>
<evidence type="ECO:0000255" key="5">
    <source>
        <dbReference type="PROSITE-ProRule" id="PRU00145"/>
    </source>
</evidence>
<evidence type="ECO:0000255" key="6">
    <source>
        <dbReference type="PROSITE-ProRule" id="PRU00782"/>
    </source>
</evidence>
<evidence type="ECO:0000255" key="7">
    <source>
        <dbReference type="PROSITE-ProRule" id="PRU01190"/>
    </source>
</evidence>
<evidence type="ECO:0000256" key="8">
    <source>
        <dbReference type="SAM" id="MobiDB-lite"/>
    </source>
</evidence>
<evidence type="ECO:0000269" key="9">
    <source>
    </source>
</evidence>
<evidence type="ECO:0000269" key="10">
    <source>
    </source>
</evidence>
<evidence type="ECO:0000305" key="11"/>
<feature type="chain" id="PRO_0000328608" description="Myosin-M heavy chain">
    <location>
        <begin position="1"/>
        <end position="1737"/>
    </location>
</feature>
<feature type="domain" description="Myosin N-terminal SH3-like" evidence="7">
    <location>
        <begin position="4"/>
        <end position="55"/>
    </location>
</feature>
<feature type="domain" description="Myosin motor" evidence="6">
    <location>
        <begin position="59"/>
        <end position="886"/>
    </location>
</feature>
<feature type="domain" description="IQ 1" evidence="4">
    <location>
        <begin position="889"/>
        <end position="918"/>
    </location>
</feature>
<feature type="domain" description="IQ 2" evidence="4">
    <location>
        <begin position="912"/>
        <end position="941"/>
    </location>
</feature>
<feature type="domain" description="DH" evidence="3">
    <location>
        <begin position="1389"/>
        <end position="1572"/>
    </location>
</feature>
<feature type="domain" description="PH" evidence="5">
    <location>
        <begin position="1603"/>
        <end position="1714"/>
    </location>
</feature>
<feature type="region of interest" description="Disordered" evidence="8">
    <location>
        <begin position="640"/>
        <end position="727"/>
    </location>
</feature>
<feature type="region of interest" description="Actin-binding" evidence="1">
    <location>
        <begin position="754"/>
        <end position="761"/>
    </location>
</feature>
<feature type="region of interest" description="Disordered" evidence="8">
    <location>
        <begin position="947"/>
        <end position="1099"/>
    </location>
</feature>
<feature type="region of interest" description="Disordered" evidence="8">
    <location>
        <begin position="1117"/>
        <end position="1199"/>
    </location>
</feature>
<feature type="region of interest" description="Disordered" evidence="8">
    <location>
        <begin position="1266"/>
        <end position="1290"/>
    </location>
</feature>
<feature type="region of interest" description="Disordered" evidence="8">
    <location>
        <begin position="1304"/>
        <end position="1364"/>
    </location>
</feature>
<feature type="coiled-coil region" evidence="2">
    <location>
        <begin position="926"/>
        <end position="1039"/>
    </location>
</feature>
<feature type="compositionally biased region" description="Low complexity" evidence="8">
    <location>
        <begin position="641"/>
        <end position="663"/>
    </location>
</feature>
<feature type="compositionally biased region" description="Low complexity" evidence="8">
    <location>
        <begin position="679"/>
        <end position="724"/>
    </location>
</feature>
<feature type="compositionally biased region" description="Basic and acidic residues" evidence="8">
    <location>
        <begin position="947"/>
        <end position="1028"/>
    </location>
</feature>
<feature type="compositionally biased region" description="Low complexity" evidence="8">
    <location>
        <begin position="1044"/>
        <end position="1070"/>
    </location>
</feature>
<feature type="compositionally biased region" description="Pro residues" evidence="8">
    <location>
        <begin position="1071"/>
        <end position="1081"/>
    </location>
</feature>
<feature type="compositionally biased region" description="Low complexity" evidence="8">
    <location>
        <begin position="1082"/>
        <end position="1098"/>
    </location>
</feature>
<feature type="compositionally biased region" description="Basic and acidic residues" evidence="8">
    <location>
        <begin position="1121"/>
        <end position="1131"/>
    </location>
</feature>
<feature type="compositionally biased region" description="Low complexity" evidence="8">
    <location>
        <begin position="1132"/>
        <end position="1141"/>
    </location>
</feature>
<feature type="compositionally biased region" description="Polar residues" evidence="8">
    <location>
        <begin position="1143"/>
        <end position="1153"/>
    </location>
</feature>
<feature type="compositionally biased region" description="Pro residues" evidence="8">
    <location>
        <begin position="1162"/>
        <end position="1171"/>
    </location>
</feature>
<feature type="compositionally biased region" description="Polar residues" evidence="8">
    <location>
        <begin position="1180"/>
        <end position="1198"/>
    </location>
</feature>
<feature type="compositionally biased region" description="Polar residues" evidence="8">
    <location>
        <begin position="1274"/>
        <end position="1288"/>
    </location>
</feature>
<feature type="compositionally biased region" description="Low complexity" evidence="8">
    <location>
        <begin position="1304"/>
        <end position="1359"/>
    </location>
</feature>
<feature type="binding site" evidence="1">
    <location>
        <begin position="154"/>
        <end position="161"/>
    </location>
    <ligand>
        <name>ATP</name>
        <dbReference type="ChEBI" id="CHEBI:30616"/>
    </ligand>
</feature>
<keyword id="KW-0009">Actin-binding</keyword>
<keyword id="KW-0067">ATP-binding</keyword>
<keyword id="KW-0175">Coiled coil</keyword>
<keyword id="KW-0963">Cytoplasm</keyword>
<keyword id="KW-0505">Motor protein</keyword>
<keyword id="KW-0518">Myosin</keyword>
<keyword id="KW-0547">Nucleotide-binding</keyword>
<keyword id="KW-1185">Reference proteome</keyword>
<keyword id="KW-0677">Repeat</keyword>
<keyword id="KW-0728">SH3 domain</keyword>
<gene>
    <name type="primary">myoM</name>
    <name type="synonym">racGEF</name>
    <name type="ORF">DDB_G0292262</name>
</gene>
<protein>
    <recommendedName>
        <fullName>Myosin-M heavy chain</fullName>
    </recommendedName>
    <alternativeName>
        <fullName>RhoGEF domain-containing protein myoM</fullName>
    </alternativeName>
</protein>
<dbReference type="EMBL" id="AF090533">
    <property type="protein sequence ID" value="AAD47903.1"/>
    <property type="molecule type" value="mRNA"/>
</dbReference>
<dbReference type="EMBL" id="AB017910">
    <property type="protein sequence ID" value="BAA84604.1"/>
    <property type="molecule type" value="Genomic_DNA"/>
</dbReference>
<dbReference type="EMBL" id="AAFI02000189">
    <property type="protein sequence ID" value="EAL61255.1"/>
    <property type="molecule type" value="Genomic_DNA"/>
</dbReference>
<dbReference type="PIR" id="A59235">
    <property type="entry name" value="A59235"/>
</dbReference>
<dbReference type="RefSeq" id="XP_629701.1">
    <property type="nucleotide sequence ID" value="XM_629699.1"/>
</dbReference>
<dbReference type="SMR" id="Q9TW28"/>
<dbReference type="STRING" id="44689.Q9TW28"/>
<dbReference type="GlyGen" id="Q9TW28">
    <property type="glycosylation" value="2 sites"/>
</dbReference>
<dbReference type="PaxDb" id="44689-DDB0191100"/>
<dbReference type="EnsemblProtists" id="EAL61255">
    <property type="protein sequence ID" value="EAL61255"/>
    <property type="gene ID" value="DDB_G0292262"/>
</dbReference>
<dbReference type="GeneID" id="8628615"/>
<dbReference type="KEGG" id="ddi:DDB_G0292262"/>
<dbReference type="dictyBase" id="DDB_G0292262">
    <property type="gene designation" value="myoM"/>
</dbReference>
<dbReference type="VEuPathDB" id="AmoebaDB:DDB_G0292262"/>
<dbReference type="eggNOG" id="KOG0160">
    <property type="taxonomic scope" value="Eukaryota"/>
</dbReference>
<dbReference type="eggNOG" id="KOG3519">
    <property type="taxonomic scope" value="Eukaryota"/>
</dbReference>
<dbReference type="HOGENOM" id="CLU_239802_0_0_1"/>
<dbReference type="InParanoid" id="Q9TW28"/>
<dbReference type="OMA" id="AFLKMSH"/>
<dbReference type="PhylomeDB" id="Q9TW28"/>
<dbReference type="Reactome" id="R-DDI-9013418">
    <property type="pathway name" value="RHOBTB2 GTPase cycle"/>
</dbReference>
<dbReference type="Reactome" id="R-DDI-9013419">
    <property type="pathway name" value="RHOT2 GTPase cycle"/>
</dbReference>
<dbReference type="Reactome" id="R-DDI-9013420">
    <property type="pathway name" value="RHOU GTPase cycle"/>
</dbReference>
<dbReference type="Reactome" id="R-DDI-9013422">
    <property type="pathway name" value="RHOBTB1 GTPase cycle"/>
</dbReference>
<dbReference type="Reactome" id="R-DDI-9013425">
    <property type="pathway name" value="RHOT1 GTPase cycle"/>
</dbReference>
<dbReference type="PRO" id="PR:Q9TW28"/>
<dbReference type="Proteomes" id="UP000002195">
    <property type="component" value="Chromosome 6"/>
</dbReference>
<dbReference type="GO" id="GO:0015629">
    <property type="term" value="C:actin cytoskeleton"/>
    <property type="evidence" value="ECO:0000318"/>
    <property type="project" value="GO_Central"/>
</dbReference>
<dbReference type="GO" id="GO:0042995">
    <property type="term" value="C:cell projection"/>
    <property type="evidence" value="ECO:0000314"/>
    <property type="project" value="dictyBase"/>
</dbReference>
<dbReference type="GO" id="GO:0005737">
    <property type="term" value="C:cytoplasm"/>
    <property type="evidence" value="ECO:0000318"/>
    <property type="project" value="GO_Central"/>
</dbReference>
<dbReference type="GO" id="GO:0016020">
    <property type="term" value="C:membrane"/>
    <property type="evidence" value="ECO:0000318"/>
    <property type="project" value="GO_Central"/>
</dbReference>
<dbReference type="GO" id="GO:0016459">
    <property type="term" value="C:myosin complex"/>
    <property type="evidence" value="ECO:0007669"/>
    <property type="project" value="UniProtKB-KW"/>
</dbReference>
<dbReference type="GO" id="GO:0051015">
    <property type="term" value="F:actin filament binding"/>
    <property type="evidence" value="ECO:0000314"/>
    <property type="project" value="dictyBase"/>
</dbReference>
<dbReference type="GO" id="GO:0005524">
    <property type="term" value="F:ATP binding"/>
    <property type="evidence" value="ECO:0007669"/>
    <property type="project" value="UniProtKB-KW"/>
</dbReference>
<dbReference type="GO" id="GO:0005085">
    <property type="term" value="F:guanyl-nucleotide exchange factor activity"/>
    <property type="evidence" value="ECO:0000314"/>
    <property type="project" value="dictyBase"/>
</dbReference>
<dbReference type="GO" id="GO:0000146">
    <property type="term" value="F:microfilament motor activity"/>
    <property type="evidence" value="ECO:0000314"/>
    <property type="project" value="dictyBase"/>
</dbReference>
<dbReference type="GO" id="GO:0007015">
    <property type="term" value="P:actin filament organization"/>
    <property type="evidence" value="ECO:0000318"/>
    <property type="project" value="GO_Central"/>
</dbReference>
<dbReference type="GO" id="GO:0006897">
    <property type="term" value="P:endocytosis"/>
    <property type="evidence" value="ECO:0000318"/>
    <property type="project" value="GO_Central"/>
</dbReference>
<dbReference type="GO" id="GO:0006972">
    <property type="term" value="P:hyperosmotic response"/>
    <property type="evidence" value="ECO:0000315"/>
    <property type="project" value="dictyBase"/>
</dbReference>
<dbReference type="GO" id="GO:0006971">
    <property type="term" value="P:hypotonic response"/>
    <property type="evidence" value="ECO:0000315"/>
    <property type="project" value="dictyBase"/>
</dbReference>
<dbReference type="GO" id="GO:0031268">
    <property type="term" value="P:pseudopodium organization"/>
    <property type="evidence" value="ECO:0000315"/>
    <property type="project" value="dictyBase"/>
</dbReference>
<dbReference type="GO" id="GO:0035020">
    <property type="term" value="P:regulation of Rac protein signal transduction"/>
    <property type="evidence" value="ECO:0000314"/>
    <property type="project" value="dictyBase"/>
</dbReference>
<dbReference type="CDD" id="cd14906">
    <property type="entry name" value="MYSc_Myo45"/>
    <property type="match status" value="1"/>
</dbReference>
<dbReference type="CDD" id="cd00160">
    <property type="entry name" value="RhoGEF"/>
    <property type="match status" value="1"/>
</dbReference>
<dbReference type="Gene3D" id="1.20.5.4820">
    <property type="match status" value="1"/>
</dbReference>
<dbReference type="Gene3D" id="1.20.58.530">
    <property type="match status" value="2"/>
</dbReference>
<dbReference type="Gene3D" id="1.20.900.10">
    <property type="entry name" value="Dbl homology (DH) domain"/>
    <property type="match status" value="1"/>
</dbReference>
<dbReference type="Gene3D" id="3.40.850.10">
    <property type="entry name" value="Kinesin motor domain"/>
    <property type="match status" value="2"/>
</dbReference>
<dbReference type="Gene3D" id="1.20.120.720">
    <property type="entry name" value="Myosin VI head, motor domain, U50 subdomain"/>
    <property type="match status" value="2"/>
</dbReference>
<dbReference type="Gene3D" id="2.30.29.30">
    <property type="entry name" value="Pleckstrin-homology domain (PH domain)/Phosphotyrosine-binding domain (PTB)"/>
    <property type="match status" value="1"/>
</dbReference>
<dbReference type="InterPro" id="IPR035899">
    <property type="entry name" value="DBL_dom_sf"/>
</dbReference>
<dbReference type="InterPro" id="IPR000219">
    <property type="entry name" value="DH_dom"/>
</dbReference>
<dbReference type="InterPro" id="IPR036961">
    <property type="entry name" value="Kinesin_motor_dom_sf"/>
</dbReference>
<dbReference type="InterPro" id="IPR001609">
    <property type="entry name" value="Myosin_head_motor_dom-like"/>
</dbReference>
<dbReference type="InterPro" id="IPR004009">
    <property type="entry name" value="Myosin_N"/>
</dbReference>
<dbReference type="InterPro" id="IPR027417">
    <property type="entry name" value="P-loop_NTPase"/>
</dbReference>
<dbReference type="InterPro" id="IPR011993">
    <property type="entry name" value="PH-like_dom_sf"/>
</dbReference>
<dbReference type="InterPro" id="IPR001849">
    <property type="entry name" value="PH_domain"/>
</dbReference>
<dbReference type="InterPro" id="IPR055251">
    <property type="entry name" value="SOS1_NGEF_PH"/>
</dbReference>
<dbReference type="PANTHER" id="PTHR13140">
    <property type="entry name" value="MYOSIN"/>
    <property type="match status" value="1"/>
</dbReference>
<dbReference type="PANTHER" id="PTHR13140:SF752">
    <property type="entry name" value="MYOSIN-M HEAVY CHAIN"/>
    <property type="match status" value="1"/>
</dbReference>
<dbReference type="Pfam" id="PF00063">
    <property type="entry name" value="Myosin_head"/>
    <property type="match status" value="2"/>
</dbReference>
<dbReference type="Pfam" id="PF00621">
    <property type="entry name" value="RhoGEF"/>
    <property type="match status" value="1"/>
</dbReference>
<dbReference type="Pfam" id="PF22697">
    <property type="entry name" value="SOS1_NGEF_PH"/>
    <property type="match status" value="1"/>
</dbReference>
<dbReference type="PRINTS" id="PR00193">
    <property type="entry name" value="MYOSINHEAVY"/>
</dbReference>
<dbReference type="SMART" id="SM00242">
    <property type="entry name" value="MYSc"/>
    <property type="match status" value="1"/>
</dbReference>
<dbReference type="SMART" id="SM00233">
    <property type="entry name" value="PH"/>
    <property type="match status" value="1"/>
</dbReference>
<dbReference type="SMART" id="SM00325">
    <property type="entry name" value="RhoGEF"/>
    <property type="match status" value="1"/>
</dbReference>
<dbReference type="SUPFAM" id="SSF48065">
    <property type="entry name" value="DBL homology domain (DH-domain)"/>
    <property type="match status" value="1"/>
</dbReference>
<dbReference type="SUPFAM" id="SSF52540">
    <property type="entry name" value="P-loop containing nucleoside triphosphate hydrolases"/>
    <property type="match status" value="1"/>
</dbReference>
<dbReference type="SUPFAM" id="SSF50729">
    <property type="entry name" value="PH domain-like"/>
    <property type="match status" value="1"/>
</dbReference>
<dbReference type="PROSITE" id="PS50010">
    <property type="entry name" value="DH_2"/>
    <property type="match status" value="1"/>
</dbReference>
<dbReference type="PROSITE" id="PS50096">
    <property type="entry name" value="IQ"/>
    <property type="match status" value="1"/>
</dbReference>
<dbReference type="PROSITE" id="PS51456">
    <property type="entry name" value="MYOSIN_MOTOR"/>
    <property type="match status" value="1"/>
</dbReference>
<dbReference type="PROSITE" id="PS50003">
    <property type="entry name" value="PH_DOMAIN"/>
    <property type="match status" value="1"/>
</dbReference>
<dbReference type="PROSITE" id="PS51844">
    <property type="entry name" value="SH3_LIKE"/>
    <property type="match status" value="1"/>
</dbReference>
<accession>Q9TW28</accession>
<accession>Q54DE0</accession>
<comment type="function">
    <text evidence="10">Myosins are actin-based motor molecules with ATPase activity. Involved in macropinocytosis and remodeling of actin cytoskeleton.</text>
</comment>
<comment type="subunit">
    <text evidence="10">Monomer.</text>
</comment>
<comment type="subcellular location">
    <subcellularLocation>
        <location evidence="9">Cytoplasm</location>
    </subcellularLocation>
    <text>Enriched in actin cortex regions.</text>
</comment>
<comment type="developmental stage">
    <text evidence="10">Expressed (in low abundance) during the first half of the developmental cycle.</text>
</comment>
<comment type="domain">
    <text evidence="10">DH (RhoGEF) domain interacts with Rac1-related GTPases.</text>
</comment>
<comment type="similarity">
    <text evidence="11">Belongs to the TRAFAC class myosin-kinesin ATPase superfamily. Myosin family.</text>
</comment>
<organism>
    <name type="scientific">Dictyostelium discoideum</name>
    <name type="common">Social amoeba</name>
    <dbReference type="NCBI Taxonomy" id="44689"/>
    <lineage>
        <taxon>Eukaryota</taxon>
        <taxon>Amoebozoa</taxon>
        <taxon>Evosea</taxon>
        <taxon>Eumycetozoa</taxon>
        <taxon>Dictyostelia</taxon>
        <taxon>Dictyosteliales</taxon>
        <taxon>Dictyosteliaceae</taxon>
        <taxon>Dictyostelium</taxon>
    </lineage>
</organism>
<sequence length="1737" mass="195862">MKHLEGDIVWVPHTVNGYCRGKIIGYNEKNQVTVRLLELNEEIKINEQLIQNYNQSDDKDFSDMVEIQDLSEAIILNNLGLRYKSDQIYTYIGNVLISINPYKEIKDIYSLNILNKYKDINTIKSNPPHIYAVALRAYQSMVSEKKNQSIIISGESGSGKTEASKTILQYLINTSNSNSNNNTNINNNNNSIEKDILNSNPILEAFGNSRTTKNHNSSRFGKFLKIEFRSSDMKIDGASIETYLLEKSRISHRPDVNNLSYHIFYYLVMGASKEERERLGLDNDPSKYRYLDASTSVIESFKKQSNGGSGGGSGNNDLSESLQLVKQSLESMSIAKEQCDDIFLTLAAILHLGNIEFEVDQTENEQTSGFSKISEQKASVKKSLSMVSKLLGYPEQVFKQTLLNRNLKGGGRGSVYCRPMEVYQSEQTRDALSKALYVRLFASIVEKINVKFIQNTGSKDLQGGYSSKRNNLFIGVLDIFGFENLSSNSLDQLLINFTNEKLQQQFNLNVFENEQKDYLQEGIPWSTSNFIDNKECIELFEKKSYGLLSLLDDECMMPKGSEVTLLEKYNKQYHNTNQYYQRTLAKGTLGIKHFAGDVTYQTDGWLEKNRDSIPTEVEQLLSASSNNLIKSLFNLKELNKSNDNNSNNNNSNNNSSSSSSSQSTASITAKASPPRERFNSGSGSGTTSPLNLSGSSSPLSGSGSYSIIGGNSNSNSNNNNSSNNKKSQSVSVAGQFIEQLNKLISTINSTSVHYIRCIKPNVTMDCNNFNNSHVLSQLRNVGVLNTVKVRKMGYSYRRDFIQFYSRYNCILNSLNIKINLTNINHSNLCKEILENVNSQYKNNNNNKNNNNQIVKITTNSKPTFQIGKTKIFISDELYIYLEKKRYDSLVDSVLKIQAFFKMIKIRNQYKRNKESSLFLQTLIRAQRAKKDFEQLVILENKRKEEERKKELERQRKEEEERQKELERQRREEEKELERKRKEEERELERQRKEEEKEQERKRKEEEKEQERKKKEEKEIEKKRKEEEKKKKKNEQNLSLPSLDITNSPSLINTTTTTTTTTTTTTNTSSPPLSPPISPRPSTPSSTSSSSSTTSSPSTKKQLLFKFNSISNLLSKSLHGSSHSDKNSKEDNNSNNNNNGDSTIILSSDSSFGQPTPKATSTPTPPPPPPLKTQPVPISSGVENNSSPNLWSHRNSPNFNGLVREKSRARIGRLTIRSASPLDLTYLPDPSKNEGSPQFTSQSLDFTPNIPPIITNSIVEQQSSLSGINKPIPQRTISSSENSPLSRANSSISSSLLILTPTLTSLSTSTTPSTPTTPKTPTTLSSSSVSTSTSLSSVSSSVSSSSSSSIPTPIIESTPSNSNEDLITTLSSPISTGHTGESIEEKNKRFRIKIINELIETERDYVRDLNIVVEVFLNPIREKQLLSAKDINSLFSNIEILFSINMNVLKALEKDKDPLCENISVGQTFLDMSHYLKMYTTYCSNQQNALKILEEEKIKNQPFREYLEFCMNDSVCRGLPLNSFIIKPVQRICKYPLLIKETIKFTPNDHPDKPALEEVDKKISDIVQSINEAKRTLELFQKIVDLQNSIDGLEDTNLMEQGRTLLMEGTVSAVKELNSEDSLSRTLFLFNNLILICSFGTNVLSTAINQFKTKKLKLKAKIPISDSRLIFVSDTDSVKYALEIVNIKEDSNYILCFNNDQDRSKWFKQIKALIQEQKLSNAKKAATIGNSRLIQTTS</sequence>
<reference key="1">
    <citation type="journal article" date="1999" name="Cell Biochem. Biophys.">
        <title>A potentially exhaustive screening strategy reveals two novel divergent myosins in Dictyostelium.</title>
        <authorList>
            <person name="Schwarz E.C."/>
            <person name="Geissler H."/>
            <person name="Soldati T."/>
        </authorList>
    </citation>
    <scope>NUCLEOTIDE SEQUENCE [MRNA]</scope>
    <source>
        <strain>AX2</strain>
    </source>
</reference>
<reference key="2">
    <citation type="journal article" date="2000" name="FEBS Lett.">
        <title>Novel Dictyostelium unconventional myosin, MyoM, has a putative RhoGEF domain.</title>
        <authorList>
            <person name="Oishi N."/>
            <person name="Adachi H."/>
            <person name="Sutoh K."/>
        </authorList>
    </citation>
    <scope>NUCLEOTIDE SEQUENCE [GENOMIC DNA]</scope>
    <scope>SUBCELLULAR LOCATION</scope>
    <source>
        <strain>AX2</strain>
    </source>
</reference>
<reference key="3">
    <citation type="journal article" date="2005" name="Nature">
        <title>The genome of the social amoeba Dictyostelium discoideum.</title>
        <authorList>
            <person name="Eichinger L."/>
            <person name="Pachebat J.A."/>
            <person name="Gloeckner G."/>
            <person name="Rajandream M.A."/>
            <person name="Sucgang R."/>
            <person name="Berriman M."/>
            <person name="Song J."/>
            <person name="Olsen R."/>
            <person name="Szafranski K."/>
            <person name="Xu Q."/>
            <person name="Tunggal B."/>
            <person name="Kummerfeld S."/>
            <person name="Madera M."/>
            <person name="Konfortov B.A."/>
            <person name="Rivero F."/>
            <person name="Bankier A.T."/>
            <person name="Lehmann R."/>
            <person name="Hamlin N."/>
            <person name="Davies R."/>
            <person name="Gaudet P."/>
            <person name="Fey P."/>
            <person name="Pilcher K."/>
            <person name="Chen G."/>
            <person name="Saunders D."/>
            <person name="Sodergren E.J."/>
            <person name="Davis P."/>
            <person name="Kerhornou A."/>
            <person name="Nie X."/>
            <person name="Hall N."/>
            <person name="Anjard C."/>
            <person name="Hemphill L."/>
            <person name="Bason N."/>
            <person name="Farbrother P."/>
            <person name="Desany B."/>
            <person name="Just E."/>
            <person name="Morio T."/>
            <person name="Rost R."/>
            <person name="Churcher C.M."/>
            <person name="Cooper J."/>
            <person name="Haydock S."/>
            <person name="van Driessche N."/>
            <person name="Cronin A."/>
            <person name="Goodhead I."/>
            <person name="Muzny D.M."/>
            <person name="Mourier T."/>
            <person name="Pain A."/>
            <person name="Lu M."/>
            <person name="Harper D."/>
            <person name="Lindsay R."/>
            <person name="Hauser H."/>
            <person name="James K.D."/>
            <person name="Quiles M."/>
            <person name="Madan Babu M."/>
            <person name="Saito T."/>
            <person name="Buchrieser C."/>
            <person name="Wardroper A."/>
            <person name="Felder M."/>
            <person name="Thangavelu M."/>
            <person name="Johnson D."/>
            <person name="Knights A."/>
            <person name="Loulseged H."/>
            <person name="Mungall K.L."/>
            <person name="Oliver K."/>
            <person name="Price C."/>
            <person name="Quail M.A."/>
            <person name="Urushihara H."/>
            <person name="Hernandez J."/>
            <person name="Rabbinowitsch E."/>
            <person name="Steffen D."/>
            <person name="Sanders M."/>
            <person name="Ma J."/>
            <person name="Kohara Y."/>
            <person name="Sharp S."/>
            <person name="Simmonds M.N."/>
            <person name="Spiegler S."/>
            <person name="Tivey A."/>
            <person name="Sugano S."/>
            <person name="White B."/>
            <person name="Walker D."/>
            <person name="Woodward J.R."/>
            <person name="Winckler T."/>
            <person name="Tanaka Y."/>
            <person name="Shaulsky G."/>
            <person name="Schleicher M."/>
            <person name="Weinstock G.M."/>
            <person name="Rosenthal A."/>
            <person name="Cox E.C."/>
            <person name="Chisholm R.L."/>
            <person name="Gibbs R.A."/>
            <person name="Loomis W.F."/>
            <person name="Platzer M."/>
            <person name="Kay R.R."/>
            <person name="Williams J.G."/>
            <person name="Dear P.H."/>
            <person name="Noegel A.A."/>
            <person name="Barrell B.G."/>
            <person name="Kuspa A."/>
        </authorList>
    </citation>
    <scope>NUCLEOTIDE SEQUENCE [LARGE SCALE GENOMIC DNA]</scope>
    <source>
        <strain>AX4</strain>
    </source>
</reference>
<reference key="4">
    <citation type="journal article" date="2000" name="Traffic">
        <title>The tail domain of myosin M catalyses nucleotide exchange on Rac1 GTPases and can induce actin-driven surface protrusions.</title>
        <authorList>
            <person name="Geissler H."/>
            <person name="Ullmann R."/>
            <person name="Soldati T."/>
        </authorList>
    </citation>
    <scope>FUNCTION</scope>
    <scope>DEVELOPMENTAL STAGE</scope>
    <scope>DOMAIN</scope>
    <scope>SUBUNIT</scope>
</reference>
<reference key="5">
    <citation type="journal article" date="2006" name="BMC Genomics">
        <title>Thirteen is enough: the myosins of Dictyostelium discoideum and their light chains.</title>
        <authorList>
            <person name="Kollmar M."/>
        </authorList>
    </citation>
    <scope>NOMENCLATURE</scope>
</reference>
<proteinExistence type="evidence at protein level"/>
<name>MYOM_DICDI</name>